<proteinExistence type="inferred from homology"/>
<feature type="chain" id="PRO_1000144782" description="Hydroxyacylglutathione hydrolase">
    <location>
        <begin position="1"/>
        <end position="259"/>
    </location>
</feature>
<feature type="binding site" evidence="1">
    <location>
        <position position="56"/>
    </location>
    <ligand>
        <name>Zn(2+)</name>
        <dbReference type="ChEBI" id="CHEBI:29105"/>
        <label>1</label>
    </ligand>
</feature>
<feature type="binding site" evidence="1">
    <location>
        <position position="58"/>
    </location>
    <ligand>
        <name>Zn(2+)</name>
        <dbReference type="ChEBI" id="CHEBI:29105"/>
        <label>1</label>
    </ligand>
</feature>
<feature type="binding site" evidence="1">
    <location>
        <position position="60"/>
    </location>
    <ligand>
        <name>Zn(2+)</name>
        <dbReference type="ChEBI" id="CHEBI:29105"/>
        <label>2</label>
    </ligand>
</feature>
<feature type="binding site" evidence="1">
    <location>
        <position position="61"/>
    </location>
    <ligand>
        <name>Zn(2+)</name>
        <dbReference type="ChEBI" id="CHEBI:29105"/>
        <label>2</label>
    </ligand>
</feature>
<feature type="binding site" evidence="1">
    <location>
        <position position="112"/>
    </location>
    <ligand>
        <name>Zn(2+)</name>
        <dbReference type="ChEBI" id="CHEBI:29105"/>
        <label>1</label>
    </ligand>
</feature>
<feature type="binding site" evidence="1">
    <location>
        <position position="133"/>
    </location>
    <ligand>
        <name>Zn(2+)</name>
        <dbReference type="ChEBI" id="CHEBI:29105"/>
        <label>1</label>
    </ligand>
</feature>
<feature type="binding site" evidence="1">
    <location>
        <position position="133"/>
    </location>
    <ligand>
        <name>Zn(2+)</name>
        <dbReference type="ChEBI" id="CHEBI:29105"/>
        <label>2</label>
    </ligand>
</feature>
<feature type="binding site" evidence="1">
    <location>
        <position position="171"/>
    </location>
    <ligand>
        <name>Zn(2+)</name>
        <dbReference type="ChEBI" id="CHEBI:29105"/>
        <label>2</label>
    </ligand>
</feature>
<protein>
    <recommendedName>
        <fullName evidence="1">Hydroxyacylglutathione hydrolase</fullName>
        <ecNumber evidence="1">3.1.2.6</ecNumber>
    </recommendedName>
    <alternativeName>
        <fullName evidence="1">Glyoxalase II</fullName>
        <shortName evidence="1">Glx II</shortName>
    </alternativeName>
</protein>
<organism>
    <name type="scientific">Pseudomonas entomophila (strain L48)</name>
    <dbReference type="NCBI Taxonomy" id="384676"/>
    <lineage>
        <taxon>Bacteria</taxon>
        <taxon>Pseudomonadati</taxon>
        <taxon>Pseudomonadota</taxon>
        <taxon>Gammaproteobacteria</taxon>
        <taxon>Pseudomonadales</taxon>
        <taxon>Pseudomonadaceae</taxon>
        <taxon>Pseudomonas</taxon>
    </lineage>
</organism>
<name>GLO2_PSEE4</name>
<accession>Q1I7T2</accession>
<comment type="function">
    <text evidence="1">Thiolesterase that catalyzes the hydrolysis of S-D-lactoyl-glutathione to form glutathione and D-lactic acid.</text>
</comment>
<comment type="catalytic activity">
    <reaction evidence="1">
        <text>an S-(2-hydroxyacyl)glutathione + H2O = a 2-hydroxy carboxylate + glutathione + H(+)</text>
        <dbReference type="Rhea" id="RHEA:21864"/>
        <dbReference type="ChEBI" id="CHEBI:15377"/>
        <dbReference type="ChEBI" id="CHEBI:15378"/>
        <dbReference type="ChEBI" id="CHEBI:57925"/>
        <dbReference type="ChEBI" id="CHEBI:58896"/>
        <dbReference type="ChEBI" id="CHEBI:71261"/>
        <dbReference type="EC" id="3.1.2.6"/>
    </reaction>
</comment>
<comment type="cofactor">
    <cofactor evidence="1">
        <name>Zn(2+)</name>
        <dbReference type="ChEBI" id="CHEBI:29105"/>
    </cofactor>
    <text evidence="1">Binds 2 Zn(2+) ions per subunit.</text>
</comment>
<comment type="pathway">
    <text evidence="1">Secondary metabolite metabolism; methylglyoxal degradation; (R)-lactate from methylglyoxal: step 2/2.</text>
</comment>
<comment type="subunit">
    <text evidence="1">Monomer.</text>
</comment>
<comment type="similarity">
    <text evidence="1">Belongs to the metallo-beta-lactamase superfamily. Glyoxalase II family.</text>
</comment>
<gene>
    <name evidence="1" type="primary">gloB</name>
    <name type="ordered locus">PSEEN3561</name>
</gene>
<reference key="1">
    <citation type="journal article" date="2006" name="Nat. Biotechnol.">
        <title>Complete genome sequence of the entomopathogenic and metabolically versatile soil bacterium Pseudomonas entomophila.</title>
        <authorList>
            <person name="Vodovar N."/>
            <person name="Vallenet D."/>
            <person name="Cruveiller S."/>
            <person name="Rouy Z."/>
            <person name="Barbe V."/>
            <person name="Acosta C."/>
            <person name="Cattolico L."/>
            <person name="Jubin C."/>
            <person name="Lajus A."/>
            <person name="Segurens B."/>
            <person name="Vacherie B."/>
            <person name="Wincker P."/>
            <person name="Weissenbach J."/>
            <person name="Lemaitre B."/>
            <person name="Medigue C."/>
            <person name="Boccard F."/>
        </authorList>
    </citation>
    <scope>NUCLEOTIDE SEQUENCE [LARGE SCALE GENOMIC DNA]</scope>
    <source>
        <strain>L48</strain>
    </source>
</reference>
<sequence>MIQIDALPAFSDNYIWLLQDTANRRCAVVDPGDDAPVLAWLGKHPGWVLEAILVTHHHHDHVGGVEALKHATGAQVFGPANERIPARDIALEDGAQVHVLGLAFDVLAMPGHTLGHIAYYTAQSPTPLLFSGDTLFAAGCGRLFEGTPEQMHHSLQRLAALPEQTQVYCAHEYTLSNLRFARAVEPHSEPVQQRFEAVTQLRADNRISLPSTIGIERQTNPFLRTAEISVKQKADEWKGHSNPTQASVFAALRSWKDVF</sequence>
<dbReference type="EC" id="3.1.2.6" evidence="1"/>
<dbReference type="EMBL" id="CT573326">
    <property type="protein sequence ID" value="CAK16296.1"/>
    <property type="molecule type" value="Genomic_DNA"/>
</dbReference>
<dbReference type="RefSeq" id="WP_011534680.1">
    <property type="nucleotide sequence ID" value="NC_008027.1"/>
</dbReference>
<dbReference type="SMR" id="Q1I7T2"/>
<dbReference type="STRING" id="384676.PSEEN3561"/>
<dbReference type="GeneID" id="32806632"/>
<dbReference type="KEGG" id="pen:PSEEN3561"/>
<dbReference type="eggNOG" id="COG0491">
    <property type="taxonomic scope" value="Bacteria"/>
</dbReference>
<dbReference type="HOGENOM" id="CLU_030571_4_1_6"/>
<dbReference type="OrthoDB" id="9802248at2"/>
<dbReference type="UniPathway" id="UPA00619">
    <property type="reaction ID" value="UER00676"/>
</dbReference>
<dbReference type="Proteomes" id="UP000000658">
    <property type="component" value="Chromosome"/>
</dbReference>
<dbReference type="GO" id="GO:0004416">
    <property type="term" value="F:hydroxyacylglutathione hydrolase activity"/>
    <property type="evidence" value="ECO:0007669"/>
    <property type="project" value="UniProtKB-UniRule"/>
</dbReference>
<dbReference type="GO" id="GO:0046872">
    <property type="term" value="F:metal ion binding"/>
    <property type="evidence" value="ECO:0007669"/>
    <property type="project" value="UniProtKB-KW"/>
</dbReference>
<dbReference type="GO" id="GO:0019243">
    <property type="term" value="P:methylglyoxal catabolic process to D-lactate via S-lactoyl-glutathione"/>
    <property type="evidence" value="ECO:0007669"/>
    <property type="project" value="InterPro"/>
</dbReference>
<dbReference type="CDD" id="cd07723">
    <property type="entry name" value="hydroxyacylglutathione_hydrolase_MBL-fold"/>
    <property type="match status" value="1"/>
</dbReference>
<dbReference type="Gene3D" id="3.60.15.10">
    <property type="entry name" value="Ribonuclease Z/Hydroxyacylglutathione hydrolase-like"/>
    <property type="match status" value="1"/>
</dbReference>
<dbReference type="HAMAP" id="MF_01374">
    <property type="entry name" value="Glyoxalase_2"/>
    <property type="match status" value="1"/>
</dbReference>
<dbReference type="InterPro" id="IPR035680">
    <property type="entry name" value="Clx_II_MBL"/>
</dbReference>
<dbReference type="InterPro" id="IPR050110">
    <property type="entry name" value="Glyoxalase_II_hydrolase"/>
</dbReference>
<dbReference type="InterPro" id="IPR032282">
    <property type="entry name" value="HAGH_C"/>
</dbReference>
<dbReference type="InterPro" id="IPR017782">
    <property type="entry name" value="Hydroxyacylglutathione_Hdrlase"/>
</dbReference>
<dbReference type="InterPro" id="IPR001279">
    <property type="entry name" value="Metallo-B-lactamas"/>
</dbReference>
<dbReference type="InterPro" id="IPR036866">
    <property type="entry name" value="RibonucZ/Hydroxyglut_hydro"/>
</dbReference>
<dbReference type="NCBIfam" id="TIGR03413">
    <property type="entry name" value="GSH_gloB"/>
    <property type="match status" value="1"/>
</dbReference>
<dbReference type="PANTHER" id="PTHR43705">
    <property type="entry name" value="HYDROXYACYLGLUTATHIONE HYDROLASE"/>
    <property type="match status" value="1"/>
</dbReference>
<dbReference type="PANTHER" id="PTHR43705:SF1">
    <property type="entry name" value="HYDROXYACYLGLUTATHIONE HYDROLASE GLOB"/>
    <property type="match status" value="1"/>
</dbReference>
<dbReference type="Pfam" id="PF16123">
    <property type="entry name" value="HAGH_C"/>
    <property type="match status" value="1"/>
</dbReference>
<dbReference type="Pfam" id="PF00753">
    <property type="entry name" value="Lactamase_B"/>
    <property type="match status" value="1"/>
</dbReference>
<dbReference type="PIRSF" id="PIRSF005457">
    <property type="entry name" value="Glx"/>
    <property type="match status" value="1"/>
</dbReference>
<dbReference type="SMART" id="SM00849">
    <property type="entry name" value="Lactamase_B"/>
    <property type="match status" value="1"/>
</dbReference>
<dbReference type="SUPFAM" id="SSF56281">
    <property type="entry name" value="Metallo-hydrolase/oxidoreductase"/>
    <property type="match status" value="1"/>
</dbReference>
<evidence type="ECO:0000255" key="1">
    <source>
        <dbReference type="HAMAP-Rule" id="MF_01374"/>
    </source>
</evidence>
<keyword id="KW-0378">Hydrolase</keyword>
<keyword id="KW-0479">Metal-binding</keyword>
<keyword id="KW-0862">Zinc</keyword>